<protein>
    <recommendedName>
        <fullName evidence="1">Pyridoxine 5'-phosphate synthase</fullName>
        <shortName evidence="1">PNP synthase</shortName>
        <ecNumber evidence="1">2.6.99.2</ecNumber>
    </recommendedName>
</protein>
<reference key="1">
    <citation type="journal article" date="2003" name="Proc. Natl. Acad. Sci. U.S.A.">
        <title>Genome sequence of the cyanobacterium Prochlorococcus marinus SS120, a nearly minimal oxyphototrophic genome.</title>
        <authorList>
            <person name="Dufresne A."/>
            <person name="Salanoubat M."/>
            <person name="Partensky F."/>
            <person name="Artiguenave F."/>
            <person name="Axmann I.M."/>
            <person name="Barbe V."/>
            <person name="Duprat S."/>
            <person name="Galperin M.Y."/>
            <person name="Koonin E.V."/>
            <person name="Le Gall F."/>
            <person name="Makarova K.S."/>
            <person name="Ostrowski M."/>
            <person name="Oztas S."/>
            <person name="Robert C."/>
            <person name="Rogozin I.B."/>
            <person name="Scanlan D.J."/>
            <person name="Tandeau de Marsac N."/>
            <person name="Weissenbach J."/>
            <person name="Wincker P."/>
            <person name="Wolf Y.I."/>
            <person name="Hess W.R."/>
        </authorList>
    </citation>
    <scope>NUCLEOTIDE SEQUENCE [LARGE SCALE GENOMIC DNA]</scope>
    <source>
        <strain>SARG / CCMP1375 / SS120</strain>
    </source>
</reference>
<accession>Q7VBK3</accession>
<gene>
    <name evidence="1" type="primary">pdxJ</name>
    <name type="ordered locus">Pro_1089</name>
</gene>
<dbReference type="EC" id="2.6.99.2" evidence="1"/>
<dbReference type="EMBL" id="AE017126">
    <property type="protein sequence ID" value="AAQ00134.1"/>
    <property type="molecule type" value="Genomic_DNA"/>
</dbReference>
<dbReference type="RefSeq" id="NP_875481.1">
    <property type="nucleotide sequence ID" value="NC_005042.1"/>
</dbReference>
<dbReference type="RefSeq" id="WP_011125241.1">
    <property type="nucleotide sequence ID" value="NC_005042.1"/>
</dbReference>
<dbReference type="SMR" id="Q7VBK3"/>
<dbReference type="STRING" id="167539.Pro_1089"/>
<dbReference type="EnsemblBacteria" id="AAQ00134">
    <property type="protein sequence ID" value="AAQ00134"/>
    <property type="gene ID" value="Pro_1089"/>
</dbReference>
<dbReference type="KEGG" id="pma:Pro_1089"/>
<dbReference type="PATRIC" id="fig|167539.5.peg.1139"/>
<dbReference type="eggNOG" id="COG0854">
    <property type="taxonomic scope" value="Bacteria"/>
</dbReference>
<dbReference type="HOGENOM" id="CLU_074563_0_0_3"/>
<dbReference type="OrthoDB" id="9806590at2"/>
<dbReference type="UniPathway" id="UPA00244">
    <property type="reaction ID" value="UER00313"/>
</dbReference>
<dbReference type="Proteomes" id="UP000001420">
    <property type="component" value="Chromosome"/>
</dbReference>
<dbReference type="GO" id="GO:0005829">
    <property type="term" value="C:cytosol"/>
    <property type="evidence" value="ECO:0007669"/>
    <property type="project" value="TreeGrafter"/>
</dbReference>
<dbReference type="GO" id="GO:0033856">
    <property type="term" value="F:pyridoxine 5'-phosphate synthase activity"/>
    <property type="evidence" value="ECO:0007669"/>
    <property type="project" value="UniProtKB-EC"/>
</dbReference>
<dbReference type="GO" id="GO:0008615">
    <property type="term" value="P:pyridoxine biosynthetic process"/>
    <property type="evidence" value="ECO:0007669"/>
    <property type="project" value="UniProtKB-UniRule"/>
</dbReference>
<dbReference type="CDD" id="cd00003">
    <property type="entry name" value="PNPsynthase"/>
    <property type="match status" value="1"/>
</dbReference>
<dbReference type="Gene3D" id="3.20.20.70">
    <property type="entry name" value="Aldolase class I"/>
    <property type="match status" value="1"/>
</dbReference>
<dbReference type="HAMAP" id="MF_00279">
    <property type="entry name" value="PdxJ"/>
    <property type="match status" value="1"/>
</dbReference>
<dbReference type="InterPro" id="IPR013785">
    <property type="entry name" value="Aldolase_TIM"/>
</dbReference>
<dbReference type="InterPro" id="IPR004569">
    <property type="entry name" value="PyrdxlP_synth_PdxJ"/>
</dbReference>
<dbReference type="InterPro" id="IPR036130">
    <property type="entry name" value="Pyridoxine-5'_phos_synth"/>
</dbReference>
<dbReference type="NCBIfam" id="TIGR00559">
    <property type="entry name" value="pdxJ"/>
    <property type="match status" value="1"/>
</dbReference>
<dbReference type="NCBIfam" id="NF003625">
    <property type="entry name" value="PRK05265.1-3"/>
    <property type="match status" value="1"/>
</dbReference>
<dbReference type="NCBIfam" id="NF003627">
    <property type="entry name" value="PRK05265.1-5"/>
    <property type="match status" value="1"/>
</dbReference>
<dbReference type="PANTHER" id="PTHR30456">
    <property type="entry name" value="PYRIDOXINE 5'-PHOSPHATE SYNTHASE"/>
    <property type="match status" value="1"/>
</dbReference>
<dbReference type="PANTHER" id="PTHR30456:SF0">
    <property type="entry name" value="PYRIDOXINE 5'-PHOSPHATE SYNTHASE"/>
    <property type="match status" value="1"/>
</dbReference>
<dbReference type="Pfam" id="PF03740">
    <property type="entry name" value="PdxJ"/>
    <property type="match status" value="1"/>
</dbReference>
<dbReference type="SUPFAM" id="SSF63892">
    <property type="entry name" value="Pyridoxine 5'-phosphate synthase"/>
    <property type="match status" value="1"/>
</dbReference>
<organism>
    <name type="scientific">Prochlorococcus marinus (strain SARG / CCMP1375 / SS120)</name>
    <dbReference type="NCBI Taxonomy" id="167539"/>
    <lineage>
        <taxon>Bacteria</taxon>
        <taxon>Bacillati</taxon>
        <taxon>Cyanobacteriota</taxon>
        <taxon>Cyanophyceae</taxon>
        <taxon>Synechococcales</taxon>
        <taxon>Prochlorococcaceae</taxon>
        <taxon>Prochlorococcus</taxon>
    </lineage>
</organism>
<evidence type="ECO:0000255" key="1">
    <source>
        <dbReference type="HAMAP-Rule" id="MF_00279"/>
    </source>
</evidence>
<sequence length="246" mass="27219">MTSLGVNIDHIANIRQARLANEPDPVQMALLAELGGADGITIHLREDRRHIQDRDLKLLRETIKSRLNLEMAATTEMIEIALDLKPDMITLVPERREEITTEGGLDVASNAKSLKEIVTKMESCCIPTSLFVDANSKQLEASSKIGATWVELHTGPYARASWKNQPLEFAKISEGVARARNLGLRVNAGHGLTYQNVEPIASITEMEELNIGHTIIARAIAIGLKEAVKEMKELIKNPRHEPFFGS</sequence>
<keyword id="KW-0963">Cytoplasm</keyword>
<keyword id="KW-0664">Pyridoxine biosynthesis</keyword>
<keyword id="KW-1185">Reference proteome</keyword>
<keyword id="KW-0808">Transferase</keyword>
<proteinExistence type="inferred from homology"/>
<feature type="chain" id="PRO_0000231828" description="Pyridoxine 5'-phosphate synthase">
    <location>
        <begin position="1"/>
        <end position="246"/>
    </location>
</feature>
<feature type="active site" description="Proton acceptor" evidence="1">
    <location>
        <position position="43"/>
    </location>
</feature>
<feature type="active site" description="Proton acceptor" evidence="1">
    <location>
        <position position="70"/>
    </location>
</feature>
<feature type="active site" description="Proton donor" evidence="1">
    <location>
        <position position="190"/>
    </location>
</feature>
<feature type="binding site" evidence="1">
    <location>
        <position position="7"/>
    </location>
    <ligand>
        <name>3-amino-2-oxopropyl phosphate</name>
        <dbReference type="ChEBI" id="CHEBI:57279"/>
    </ligand>
</feature>
<feature type="binding site" evidence="1">
    <location>
        <begin position="9"/>
        <end position="10"/>
    </location>
    <ligand>
        <name>1-deoxy-D-xylulose 5-phosphate</name>
        <dbReference type="ChEBI" id="CHEBI:57792"/>
    </ligand>
</feature>
<feature type="binding site" evidence="1">
    <location>
        <position position="18"/>
    </location>
    <ligand>
        <name>3-amino-2-oxopropyl phosphate</name>
        <dbReference type="ChEBI" id="CHEBI:57279"/>
    </ligand>
</feature>
<feature type="binding site" evidence="1">
    <location>
        <position position="45"/>
    </location>
    <ligand>
        <name>1-deoxy-D-xylulose 5-phosphate</name>
        <dbReference type="ChEBI" id="CHEBI:57792"/>
    </ligand>
</feature>
<feature type="binding site" evidence="1">
    <location>
        <position position="50"/>
    </location>
    <ligand>
        <name>1-deoxy-D-xylulose 5-phosphate</name>
        <dbReference type="ChEBI" id="CHEBI:57792"/>
    </ligand>
</feature>
<feature type="binding site" evidence="1">
    <location>
        <position position="100"/>
    </location>
    <ligand>
        <name>1-deoxy-D-xylulose 5-phosphate</name>
        <dbReference type="ChEBI" id="CHEBI:57792"/>
    </ligand>
</feature>
<feature type="binding site" evidence="1">
    <location>
        <position position="191"/>
    </location>
    <ligand>
        <name>3-amino-2-oxopropyl phosphate</name>
        <dbReference type="ChEBI" id="CHEBI:57279"/>
    </ligand>
</feature>
<feature type="binding site" evidence="1">
    <location>
        <begin position="212"/>
        <end position="213"/>
    </location>
    <ligand>
        <name>3-amino-2-oxopropyl phosphate</name>
        <dbReference type="ChEBI" id="CHEBI:57279"/>
    </ligand>
</feature>
<feature type="site" description="Transition state stabilizer" evidence="1">
    <location>
        <position position="151"/>
    </location>
</feature>
<comment type="function">
    <text evidence="1">Catalyzes the complicated ring closure reaction between the two acyclic compounds 1-deoxy-D-xylulose-5-phosphate (DXP) and 3-amino-2-oxopropyl phosphate (1-amino-acetone-3-phosphate or AAP) to form pyridoxine 5'-phosphate (PNP) and inorganic phosphate.</text>
</comment>
<comment type="catalytic activity">
    <reaction evidence="1">
        <text>3-amino-2-oxopropyl phosphate + 1-deoxy-D-xylulose 5-phosphate = pyridoxine 5'-phosphate + phosphate + 2 H2O + H(+)</text>
        <dbReference type="Rhea" id="RHEA:15265"/>
        <dbReference type="ChEBI" id="CHEBI:15377"/>
        <dbReference type="ChEBI" id="CHEBI:15378"/>
        <dbReference type="ChEBI" id="CHEBI:43474"/>
        <dbReference type="ChEBI" id="CHEBI:57279"/>
        <dbReference type="ChEBI" id="CHEBI:57792"/>
        <dbReference type="ChEBI" id="CHEBI:58589"/>
        <dbReference type="EC" id="2.6.99.2"/>
    </reaction>
</comment>
<comment type="pathway">
    <text evidence="1">Cofactor biosynthesis; pyridoxine 5'-phosphate biosynthesis; pyridoxine 5'-phosphate from D-erythrose 4-phosphate: step 5/5.</text>
</comment>
<comment type="subunit">
    <text evidence="1">Homooctamer; tetramer of dimers.</text>
</comment>
<comment type="subcellular location">
    <subcellularLocation>
        <location evidence="1">Cytoplasm</location>
    </subcellularLocation>
</comment>
<comment type="similarity">
    <text evidence="1">Belongs to the PNP synthase family.</text>
</comment>
<name>PDXJ_PROMA</name>